<gene>
    <name evidence="1" type="primary">katG</name>
    <name type="ordered locus">Acid345_1356</name>
</gene>
<comment type="function">
    <text evidence="1">Bifunctional enzyme with both catalase and broad-spectrum peroxidase activity.</text>
</comment>
<comment type="catalytic activity">
    <reaction evidence="1">
        <text>H2O2 + AH2 = A + 2 H2O</text>
        <dbReference type="Rhea" id="RHEA:30275"/>
        <dbReference type="ChEBI" id="CHEBI:13193"/>
        <dbReference type="ChEBI" id="CHEBI:15377"/>
        <dbReference type="ChEBI" id="CHEBI:16240"/>
        <dbReference type="ChEBI" id="CHEBI:17499"/>
        <dbReference type="EC" id="1.11.1.21"/>
    </reaction>
</comment>
<comment type="catalytic activity">
    <reaction evidence="1">
        <text>2 H2O2 = O2 + 2 H2O</text>
        <dbReference type="Rhea" id="RHEA:20309"/>
        <dbReference type="ChEBI" id="CHEBI:15377"/>
        <dbReference type="ChEBI" id="CHEBI:15379"/>
        <dbReference type="ChEBI" id="CHEBI:16240"/>
        <dbReference type="EC" id="1.11.1.21"/>
    </reaction>
</comment>
<comment type="cofactor">
    <cofactor evidence="1">
        <name>heme b</name>
        <dbReference type="ChEBI" id="CHEBI:60344"/>
    </cofactor>
    <text evidence="1">Binds 1 heme b (iron(II)-protoporphyrin IX) group per dimer.</text>
</comment>
<comment type="subunit">
    <text evidence="1">Homodimer or homotetramer.</text>
</comment>
<comment type="PTM">
    <text evidence="1">Formation of the three residue Trp-Tyr-Met cross-link is important for the catalase, but not the peroxidase activity of the enzyme.</text>
</comment>
<comment type="similarity">
    <text evidence="1">Belongs to the peroxidase family. Peroxidase/catalase subfamily.</text>
</comment>
<protein>
    <recommendedName>
        <fullName evidence="1">Catalase-peroxidase</fullName>
        <shortName evidence="1">CP</shortName>
        <ecNumber evidence="1">1.11.1.21</ecNumber>
    </recommendedName>
    <alternativeName>
        <fullName evidence="1">Peroxidase/catalase</fullName>
    </alternativeName>
</protein>
<organism>
    <name type="scientific">Koribacter versatilis (strain Ellin345)</name>
    <dbReference type="NCBI Taxonomy" id="204669"/>
    <lineage>
        <taxon>Bacteria</taxon>
        <taxon>Pseudomonadati</taxon>
        <taxon>Acidobacteriota</taxon>
        <taxon>Terriglobia</taxon>
        <taxon>Terriglobales</taxon>
        <taxon>Candidatus Korobacteraceae</taxon>
        <taxon>Candidatus Korobacter</taxon>
    </lineage>
</organism>
<accession>Q1IRZ2</accession>
<proteinExistence type="inferred from homology"/>
<reference key="1">
    <citation type="journal article" date="2009" name="Appl. Environ. Microbiol.">
        <title>Three genomes from the phylum Acidobacteria provide insight into the lifestyles of these microorganisms in soils.</title>
        <authorList>
            <person name="Ward N.L."/>
            <person name="Challacombe J.F."/>
            <person name="Janssen P.H."/>
            <person name="Henrissat B."/>
            <person name="Coutinho P.M."/>
            <person name="Wu M."/>
            <person name="Xie G."/>
            <person name="Haft D.H."/>
            <person name="Sait M."/>
            <person name="Badger J."/>
            <person name="Barabote R.D."/>
            <person name="Bradley B."/>
            <person name="Brettin T.S."/>
            <person name="Brinkac L.M."/>
            <person name="Bruce D."/>
            <person name="Creasy T."/>
            <person name="Daugherty S.C."/>
            <person name="Davidsen T.M."/>
            <person name="DeBoy R.T."/>
            <person name="Detter J.C."/>
            <person name="Dodson R.J."/>
            <person name="Durkin A.S."/>
            <person name="Ganapathy A."/>
            <person name="Gwinn-Giglio M."/>
            <person name="Han C.S."/>
            <person name="Khouri H."/>
            <person name="Kiss H."/>
            <person name="Kothari S.P."/>
            <person name="Madupu R."/>
            <person name="Nelson K.E."/>
            <person name="Nelson W.C."/>
            <person name="Paulsen I."/>
            <person name="Penn K."/>
            <person name="Ren Q."/>
            <person name="Rosovitz M.J."/>
            <person name="Selengut J.D."/>
            <person name="Shrivastava S."/>
            <person name="Sullivan S.A."/>
            <person name="Tapia R."/>
            <person name="Thompson L.S."/>
            <person name="Watkins K.L."/>
            <person name="Yang Q."/>
            <person name="Yu C."/>
            <person name="Zafar N."/>
            <person name="Zhou L."/>
            <person name="Kuske C.R."/>
        </authorList>
    </citation>
    <scope>NUCLEOTIDE SEQUENCE [LARGE SCALE GENOMIC DNA]</scope>
    <source>
        <strain>Ellin345</strain>
    </source>
</reference>
<evidence type="ECO:0000255" key="1">
    <source>
        <dbReference type="HAMAP-Rule" id="MF_01961"/>
    </source>
</evidence>
<evidence type="ECO:0000256" key="2">
    <source>
        <dbReference type="SAM" id="MobiDB-lite"/>
    </source>
</evidence>
<sequence>MENELVSKVKAPVPGNQTNTLNEAKCPVGAHTLAGARSNANWWPNQLNINILHQHSPLSDPMPEGFNYAEEFKTLDLDAVVKDLRHLMTDSQPWWPADYGHYGPFFIRMAWHSAGTYRIGDGRGGAGSGEQRFAPLNSWPDNGNLDKARRLLWPIKQKYGRKLSWADLMVLAGNVALESMGFKTFGFAGGREDVWEPSEDIYWGPEGKWLDDKRYSGERDLENPLGAVQMGLIYVNPEGPNGKPDPAAAAVDIRETFARMAMNDEETVALIAGGHTFGKTHGAGVPTEYVGPEPEGAGIEEQGLGWKNKLGHGHGYHTITSGLEGAWTTNPIKWDNGFFDNLFGYDWELTKSPAGANQWTPKNGAGKDTVPDAHDKTKRHAPFMATTDISLKVDPIYGPISKRFHEHPQEFADAFAKAWYKLTHRDMGPLPRYLGKLVPKEPQVWQDPVPAVDHELVNDSDVAALKAKLLASGLTVSQLVTTAWAAASSFRGSDKRGGANGARIRLTPQKDWEVNQPKELAKVLPVLEKIQHDFNAQGGKKKISLADLIILGGCAAVEEAAKKGGHSVKVPFTPGRTDASQEHTDVKSFSVMEPKADGFRNYHQKGQPRPAEEMLVDKAQLLRLTAPEMTALVGGLRVLGANYGHSKHGVFTSHPETLTNDFFVNLLDMNNRWQPSGADGVYEARDRQGDHVKWTATRVDLIFGSHSQLRAFAEVYACNDAKEKFVHDFVAAWTKVMNLDRYDLAKKKAAAN</sequence>
<name>KATG_KORVE</name>
<feature type="chain" id="PRO_0000354709" description="Catalase-peroxidase">
    <location>
        <begin position="1"/>
        <end position="752"/>
    </location>
</feature>
<feature type="region of interest" description="Disordered" evidence="2">
    <location>
        <begin position="1"/>
        <end position="20"/>
    </location>
</feature>
<feature type="active site" description="Proton acceptor" evidence="1">
    <location>
        <position position="112"/>
    </location>
</feature>
<feature type="binding site" description="axial binding residue" evidence="1">
    <location>
        <position position="275"/>
    </location>
    <ligand>
        <name>heme b</name>
        <dbReference type="ChEBI" id="CHEBI:60344"/>
    </ligand>
    <ligandPart>
        <name>Fe</name>
        <dbReference type="ChEBI" id="CHEBI:18248"/>
    </ligandPart>
</feature>
<feature type="site" description="Transition state stabilizer" evidence="1">
    <location>
        <position position="108"/>
    </location>
</feature>
<feature type="cross-link" description="Tryptophyl-tyrosyl-methioninium (Trp-Tyr) (with M-260)" evidence="1">
    <location>
        <begin position="111"/>
        <end position="234"/>
    </location>
</feature>
<feature type="cross-link" description="Tryptophyl-tyrosyl-methioninium (Tyr-Met) (with W-111)" evidence="1">
    <location>
        <begin position="234"/>
        <end position="260"/>
    </location>
</feature>
<dbReference type="EC" id="1.11.1.21" evidence="1"/>
<dbReference type="EMBL" id="CP000360">
    <property type="protein sequence ID" value="ABF40358.1"/>
    <property type="molecule type" value="Genomic_DNA"/>
</dbReference>
<dbReference type="RefSeq" id="WP_011522160.1">
    <property type="nucleotide sequence ID" value="NC_008009.1"/>
</dbReference>
<dbReference type="SMR" id="Q1IRZ2"/>
<dbReference type="STRING" id="204669.Acid345_1356"/>
<dbReference type="EnsemblBacteria" id="ABF40358">
    <property type="protein sequence ID" value="ABF40358"/>
    <property type="gene ID" value="Acid345_1356"/>
</dbReference>
<dbReference type="KEGG" id="aba:Acid345_1356"/>
<dbReference type="eggNOG" id="COG0376">
    <property type="taxonomic scope" value="Bacteria"/>
</dbReference>
<dbReference type="HOGENOM" id="CLU_025424_2_0_0"/>
<dbReference type="OrthoDB" id="9759743at2"/>
<dbReference type="Proteomes" id="UP000002432">
    <property type="component" value="Chromosome"/>
</dbReference>
<dbReference type="GO" id="GO:0005829">
    <property type="term" value="C:cytosol"/>
    <property type="evidence" value="ECO:0007669"/>
    <property type="project" value="TreeGrafter"/>
</dbReference>
<dbReference type="GO" id="GO:0004096">
    <property type="term" value="F:catalase activity"/>
    <property type="evidence" value="ECO:0007669"/>
    <property type="project" value="UniProtKB-UniRule"/>
</dbReference>
<dbReference type="GO" id="GO:0020037">
    <property type="term" value="F:heme binding"/>
    <property type="evidence" value="ECO:0007669"/>
    <property type="project" value="InterPro"/>
</dbReference>
<dbReference type="GO" id="GO:0046872">
    <property type="term" value="F:metal ion binding"/>
    <property type="evidence" value="ECO:0007669"/>
    <property type="project" value="UniProtKB-KW"/>
</dbReference>
<dbReference type="GO" id="GO:0070301">
    <property type="term" value="P:cellular response to hydrogen peroxide"/>
    <property type="evidence" value="ECO:0007669"/>
    <property type="project" value="TreeGrafter"/>
</dbReference>
<dbReference type="GO" id="GO:0042744">
    <property type="term" value="P:hydrogen peroxide catabolic process"/>
    <property type="evidence" value="ECO:0007669"/>
    <property type="project" value="UniProtKB-KW"/>
</dbReference>
<dbReference type="CDD" id="cd00649">
    <property type="entry name" value="catalase_peroxidase_1"/>
    <property type="match status" value="1"/>
</dbReference>
<dbReference type="CDD" id="cd08200">
    <property type="entry name" value="catalase_peroxidase_2"/>
    <property type="match status" value="1"/>
</dbReference>
<dbReference type="FunFam" id="1.10.420.10:FF:000002">
    <property type="entry name" value="Catalase-peroxidase"/>
    <property type="match status" value="1"/>
</dbReference>
<dbReference type="FunFam" id="1.10.420.10:FF:000004">
    <property type="entry name" value="Catalase-peroxidase"/>
    <property type="match status" value="1"/>
</dbReference>
<dbReference type="FunFam" id="1.10.520.10:FF:000002">
    <property type="entry name" value="Catalase-peroxidase"/>
    <property type="match status" value="1"/>
</dbReference>
<dbReference type="Gene3D" id="1.10.520.10">
    <property type="match status" value="2"/>
</dbReference>
<dbReference type="Gene3D" id="1.10.420.10">
    <property type="entry name" value="Peroxidase, domain 2"/>
    <property type="match status" value="2"/>
</dbReference>
<dbReference type="HAMAP" id="MF_01961">
    <property type="entry name" value="Catal_peroxid"/>
    <property type="match status" value="1"/>
</dbReference>
<dbReference type="InterPro" id="IPR000763">
    <property type="entry name" value="Catalase_peroxidase"/>
</dbReference>
<dbReference type="InterPro" id="IPR002016">
    <property type="entry name" value="Haem_peroxidase"/>
</dbReference>
<dbReference type="InterPro" id="IPR010255">
    <property type="entry name" value="Haem_peroxidase_sf"/>
</dbReference>
<dbReference type="InterPro" id="IPR019794">
    <property type="entry name" value="Peroxidases_AS"/>
</dbReference>
<dbReference type="InterPro" id="IPR019793">
    <property type="entry name" value="Peroxidases_heam-ligand_BS"/>
</dbReference>
<dbReference type="NCBIfam" id="TIGR00198">
    <property type="entry name" value="cat_per_HPI"/>
    <property type="match status" value="1"/>
</dbReference>
<dbReference type="NCBIfam" id="NF011635">
    <property type="entry name" value="PRK15061.1"/>
    <property type="match status" value="1"/>
</dbReference>
<dbReference type="PANTHER" id="PTHR30555:SF0">
    <property type="entry name" value="CATALASE-PEROXIDASE"/>
    <property type="match status" value="1"/>
</dbReference>
<dbReference type="PANTHER" id="PTHR30555">
    <property type="entry name" value="HYDROPEROXIDASE I, BIFUNCTIONAL CATALASE-PEROXIDASE"/>
    <property type="match status" value="1"/>
</dbReference>
<dbReference type="Pfam" id="PF00141">
    <property type="entry name" value="peroxidase"/>
    <property type="match status" value="2"/>
</dbReference>
<dbReference type="PRINTS" id="PR00460">
    <property type="entry name" value="BPEROXIDASE"/>
</dbReference>
<dbReference type="PRINTS" id="PR00458">
    <property type="entry name" value="PEROXIDASE"/>
</dbReference>
<dbReference type="SUPFAM" id="SSF48113">
    <property type="entry name" value="Heme-dependent peroxidases"/>
    <property type="match status" value="2"/>
</dbReference>
<dbReference type="PROSITE" id="PS00435">
    <property type="entry name" value="PEROXIDASE_1"/>
    <property type="match status" value="1"/>
</dbReference>
<dbReference type="PROSITE" id="PS00436">
    <property type="entry name" value="PEROXIDASE_2"/>
    <property type="match status" value="1"/>
</dbReference>
<dbReference type="PROSITE" id="PS50873">
    <property type="entry name" value="PEROXIDASE_4"/>
    <property type="match status" value="1"/>
</dbReference>
<keyword id="KW-0349">Heme</keyword>
<keyword id="KW-0376">Hydrogen peroxide</keyword>
<keyword id="KW-0408">Iron</keyword>
<keyword id="KW-0479">Metal-binding</keyword>
<keyword id="KW-0560">Oxidoreductase</keyword>
<keyword id="KW-0575">Peroxidase</keyword>
<keyword id="KW-1185">Reference proteome</keyword>